<evidence type="ECO:0000255" key="1">
    <source>
        <dbReference type="HAMAP-Rule" id="MF_00524"/>
    </source>
</evidence>
<name>GLK_ECOL5</name>
<comment type="function">
    <text>Not highly important in E.coli as glucose is transported into the cell by the PTS system already as glucose 6-phosphate.</text>
</comment>
<comment type="catalytic activity">
    <reaction evidence="1">
        <text>D-glucose + ATP = D-glucose 6-phosphate + ADP + H(+)</text>
        <dbReference type="Rhea" id="RHEA:17825"/>
        <dbReference type="ChEBI" id="CHEBI:4167"/>
        <dbReference type="ChEBI" id="CHEBI:15378"/>
        <dbReference type="ChEBI" id="CHEBI:30616"/>
        <dbReference type="ChEBI" id="CHEBI:61548"/>
        <dbReference type="ChEBI" id="CHEBI:456216"/>
        <dbReference type="EC" id="2.7.1.2"/>
    </reaction>
</comment>
<comment type="subcellular location">
    <subcellularLocation>
        <location evidence="1">Cytoplasm</location>
    </subcellularLocation>
</comment>
<comment type="similarity">
    <text evidence="1">Belongs to the bacterial glucokinase family.</text>
</comment>
<proteinExistence type="inferred from homology"/>
<sequence>MTKYALVGDVGGTNARLALCDIASGEISQAKTYSGLDYPSLEAVIRVYLEEHKVEVKDGCIAIACPITGDWVAMTNHTWAFSIAEMKKNLGFSHLEIINDFTAVSMAIPMLKKEHLIQFGGAEPVEGKPIAVYGAGTGLGVAHLVHVDKRWVSLPGEGGHVDFAPNSEEEGIILEILRAEIGHVSAERVLSGPGLVNLYRAIVKADNRLPENLKPKDITERALADSCTDCRRALSLFCVIMGRFGGNLALNLGTFGGVFIAGGIVPRFLEFFKASGFRAAFEDKGRFKEYVHDIPVYLIVHDNPGLLGSGAHLRQTLGHIL</sequence>
<gene>
    <name evidence="1" type="primary">glk</name>
    <name type="ordered locus">ECP_2414</name>
</gene>
<protein>
    <recommendedName>
        <fullName evidence="1">Glucokinase</fullName>
        <ecNumber evidence="1">2.7.1.2</ecNumber>
    </recommendedName>
    <alternativeName>
        <fullName evidence="1">Glucose kinase</fullName>
    </alternativeName>
</protein>
<accession>Q0TF72</accession>
<organism>
    <name type="scientific">Escherichia coli O6:K15:H31 (strain 536 / UPEC)</name>
    <dbReference type="NCBI Taxonomy" id="362663"/>
    <lineage>
        <taxon>Bacteria</taxon>
        <taxon>Pseudomonadati</taxon>
        <taxon>Pseudomonadota</taxon>
        <taxon>Gammaproteobacteria</taxon>
        <taxon>Enterobacterales</taxon>
        <taxon>Enterobacteriaceae</taxon>
        <taxon>Escherichia</taxon>
    </lineage>
</organism>
<feature type="chain" id="PRO_0000268773" description="Glucokinase">
    <location>
        <begin position="1"/>
        <end position="321"/>
    </location>
</feature>
<feature type="binding site" evidence="1">
    <location>
        <begin position="8"/>
        <end position="13"/>
    </location>
    <ligand>
        <name>ATP</name>
        <dbReference type="ChEBI" id="CHEBI:30616"/>
    </ligand>
</feature>
<keyword id="KW-0067">ATP-binding</keyword>
<keyword id="KW-0963">Cytoplasm</keyword>
<keyword id="KW-0324">Glycolysis</keyword>
<keyword id="KW-0418">Kinase</keyword>
<keyword id="KW-0547">Nucleotide-binding</keyword>
<keyword id="KW-0808">Transferase</keyword>
<dbReference type="EC" id="2.7.1.2" evidence="1"/>
<dbReference type="EMBL" id="CP000247">
    <property type="protein sequence ID" value="ABG70407.1"/>
    <property type="molecule type" value="Genomic_DNA"/>
</dbReference>
<dbReference type="RefSeq" id="WP_000170355.1">
    <property type="nucleotide sequence ID" value="NC_008253.1"/>
</dbReference>
<dbReference type="SMR" id="Q0TF72"/>
<dbReference type="KEGG" id="ecp:ECP_2414"/>
<dbReference type="HOGENOM" id="CLU_042582_1_0_6"/>
<dbReference type="Proteomes" id="UP000009182">
    <property type="component" value="Chromosome"/>
</dbReference>
<dbReference type="GO" id="GO:0005829">
    <property type="term" value="C:cytosol"/>
    <property type="evidence" value="ECO:0007669"/>
    <property type="project" value="TreeGrafter"/>
</dbReference>
<dbReference type="GO" id="GO:0005524">
    <property type="term" value="F:ATP binding"/>
    <property type="evidence" value="ECO:0007669"/>
    <property type="project" value="UniProtKB-UniRule"/>
</dbReference>
<dbReference type="GO" id="GO:0005536">
    <property type="term" value="F:D-glucose binding"/>
    <property type="evidence" value="ECO:0007669"/>
    <property type="project" value="InterPro"/>
</dbReference>
<dbReference type="GO" id="GO:0004340">
    <property type="term" value="F:glucokinase activity"/>
    <property type="evidence" value="ECO:0007669"/>
    <property type="project" value="UniProtKB-UniRule"/>
</dbReference>
<dbReference type="GO" id="GO:0006096">
    <property type="term" value="P:glycolytic process"/>
    <property type="evidence" value="ECO:0007669"/>
    <property type="project" value="UniProtKB-UniRule"/>
</dbReference>
<dbReference type="CDD" id="cd24008">
    <property type="entry name" value="ASKHA_NBD_GLK"/>
    <property type="match status" value="1"/>
</dbReference>
<dbReference type="FunFam" id="3.30.420.40:FF:000045">
    <property type="entry name" value="Glucokinase"/>
    <property type="match status" value="1"/>
</dbReference>
<dbReference type="FunFam" id="3.40.367.20:FF:000002">
    <property type="entry name" value="Glucokinase"/>
    <property type="match status" value="1"/>
</dbReference>
<dbReference type="Gene3D" id="3.30.420.40">
    <property type="match status" value="1"/>
</dbReference>
<dbReference type="Gene3D" id="3.40.367.20">
    <property type="match status" value="1"/>
</dbReference>
<dbReference type="HAMAP" id="MF_00524">
    <property type="entry name" value="Glucokinase"/>
    <property type="match status" value="1"/>
</dbReference>
<dbReference type="InterPro" id="IPR043129">
    <property type="entry name" value="ATPase_NBD"/>
</dbReference>
<dbReference type="InterPro" id="IPR050201">
    <property type="entry name" value="Bacterial_glucokinase"/>
</dbReference>
<dbReference type="InterPro" id="IPR003836">
    <property type="entry name" value="Glucokinase"/>
</dbReference>
<dbReference type="NCBIfam" id="TIGR00749">
    <property type="entry name" value="glk"/>
    <property type="match status" value="1"/>
</dbReference>
<dbReference type="NCBIfam" id="NF001414">
    <property type="entry name" value="PRK00292.1-1"/>
    <property type="match status" value="1"/>
</dbReference>
<dbReference type="NCBIfam" id="NF001416">
    <property type="entry name" value="PRK00292.1-3"/>
    <property type="match status" value="1"/>
</dbReference>
<dbReference type="PANTHER" id="PTHR47690">
    <property type="entry name" value="GLUCOKINASE"/>
    <property type="match status" value="1"/>
</dbReference>
<dbReference type="PANTHER" id="PTHR47690:SF1">
    <property type="entry name" value="GLUCOKINASE"/>
    <property type="match status" value="1"/>
</dbReference>
<dbReference type="Pfam" id="PF02685">
    <property type="entry name" value="Glucokinase"/>
    <property type="match status" value="1"/>
</dbReference>
<dbReference type="SUPFAM" id="SSF53067">
    <property type="entry name" value="Actin-like ATPase domain"/>
    <property type="match status" value="1"/>
</dbReference>
<reference key="1">
    <citation type="journal article" date="2006" name="Mol. Microbiol.">
        <title>Role of pathogenicity island-associated integrases in the genome plasticity of uropathogenic Escherichia coli strain 536.</title>
        <authorList>
            <person name="Hochhut B."/>
            <person name="Wilde C."/>
            <person name="Balling G."/>
            <person name="Middendorf B."/>
            <person name="Dobrindt U."/>
            <person name="Brzuszkiewicz E."/>
            <person name="Gottschalk G."/>
            <person name="Carniel E."/>
            <person name="Hacker J."/>
        </authorList>
    </citation>
    <scope>NUCLEOTIDE SEQUENCE [LARGE SCALE GENOMIC DNA]</scope>
    <source>
        <strain>536 / UPEC</strain>
    </source>
</reference>